<evidence type="ECO:0000250" key="1">
    <source>
        <dbReference type="UniProtKB" id="P9WQD7"/>
    </source>
</evidence>
<evidence type="ECO:0000255" key="2">
    <source>
        <dbReference type="PROSITE-ProRule" id="PRU01348"/>
    </source>
</evidence>
<evidence type="ECO:0000305" key="3"/>
<accession>O69473</accession>
<feature type="chain" id="PRO_0000180332" description="3-oxoacyl-[acyl-carrier-protein] synthase 2">
    <location>
        <begin position="1"/>
        <end position="420"/>
    </location>
</feature>
<feature type="domain" description="Ketosynthase family 3 (KS3)" evidence="2">
    <location>
        <begin position="13"/>
        <end position="419"/>
    </location>
</feature>
<feature type="active site" description="For beta-ketoacyl synthase activity" evidence="2">
    <location>
        <position position="173"/>
    </location>
</feature>
<feature type="active site" description="For beta-ketoacyl synthase activity" evidence="2">
    <location>
        <position position="314"/>
    </location>
</feature>
<feature type="active site" description="For beta-ketoacyl synthase activity" evidence="2">
    <location>
        <position position="349"/>
    </location>
</feature>
<sequence>MTTSPELVTGKAFPNVVVTGIAMTTALATDAETTWKLLLDNQSGIRMLDDPFIEEFNLPVRIGGHLLEEFDHQLTRVELRRMGYLQRMSTVLSRRLWENAGSPEVDTNRLMVSIGTGLGSAEELVFSYDDMRARGMKAVSPLAVQKYMPNGAAAAVGLEHHAKAGVMTPVSACASGSEAIAHAWQQIVLGEADSAICGGVETKIEAVPIAGFSQMRIVMSTKNDNPAGACRPFDRDRDGFVFGEAGALMLIETEDSAKARSANILARIMGASITSDGFHMVAPDPNGERAGHAIARAVHLAGLSPSDIDHVNAHATGTQVGDLAEAKAINKALCNNRPAVYAPKSALGHSVGAVGAVESILTVLALRDQVIPPTLNLVNLDPDIDLDVVAGKPRPGDYRYAVNNSFGFGGHNVAIAFGCY</sequence>
<proteinExistence type="inferred from homology"/>
<keyword id="KW-0012">Acyltransferase</keyword>
<keyword id="KW-0963">Cytoplasm</keyword>
<keyword id="KW-0275">Fatty acid biosynthesis</keyword>
<keyword id="KW-0276">Fatty acid metabolism</keyword>
<keyword id="KW-0444">Lipid biosynthesis</keyword>
<keyword id="KW-0443">Lipid metabolism</keyword>
<keyword id="KW-1185">Reference proteome</keyword>
<keyword id="KW-0808">Transferase</keyword>
<organism>
    <name type="scientific">Mycobacterium leprae (strain TN)</name>
    <dbReference type="NCBI Taxonomy" id="272631"/>
    <lineage>
        <taxon>Bacteria</taxon>
        <taxon>Bacillati</taxon>
        <taxon>Actinomycetota</taxon>
        <taxon>Actinomycetes</taxon>
        <taxon>Mycobacteriales</taxon>
        <taxon>Mycobacteriaceae</taxon>
        <taxon>Mycobacterium</taxon>
    </lineage>
</organism>
<gene>
    <name type="primary">kasB</name>
    <name type="ordered locus">ML1656</name>
    <name type="ORF">MLCB1243.19c</name>
</gene>
<protein>
    <recommendedName>
        <fullName>3-oxoacyl-[acyl-carrier-protein] synthase 2</fullName>
        <ecNumber evidence="1">2.3.1.294</ecNumber>
    </recommendedName>
    <alternativeName>
        <fullName>Beta-ketoacyl-ACP synthase 2</fullName>
        <shortName>KAS 2</shortName>
    </alternativeName>
</protein>
<dbReference type="EC" id="2.3.1.294" evidence="1"/>
<dbReference type="EMBL" id="AL023635">
    <property type="protein sequence ID" value="CAA19200.1"/>
    <property type="status" value="ALT_INIT"/>
    <property type="molecule type" value="Genomic_DNA"/>
</dbReference>
<dbReference type="EMBL" id="AL583922">
    <property type="protein sequence ID" value="CAC30607.1"/>
    <property type="status" value="ALT_INIT"/>
    <property type="molecule type" value="Genomic_DNA"/>
</dbReference>
<dbReference type="PIR" id="T44710">
    <property type="entry name" value="T44710"/>
</dbReference>
<dbReference type="SMR" id="O69473"/>
<dbReference type="STRING" id="272631.gene:17575499"/>
<dbReference type="KEGG" id="mle:ML1656"/>
<dbReference type="Leproma" id="ML1656"/>
<dbReference type="eggNOG" id="COG0304">
    <property type="taxonomic scope" value="Bacteria"/>
</dbReference>
<dbReference type="HOGENOM" id="CLU_000022_69_2_11"/>
<dbReference type="UniPathway" id="UPA00915"/>
<dbReference type="Proteomes" id="UP000000806">
    <property type="component" value="Chromosome"/>
</dbReference>
<dbReference type="GO" id="GO:0005829">
    <property type="term" value="C:cytosol"/>
    <property type="evidence" value="ECO:0007669"/>
    <property type="project" value="TreeGrafter"/>
</dbReference>
<dbReference type="GO" id="GO:0004315">
    <property type="term" value="F:3-oxoacyl-[acyl-carrier-protein] synthase activity"/>
    <property type="evidence" value="ECO:0007669"/>
    <property type="project" value="TreeGrafter"/>
</dbReference>
<dbReference type="GO" id="GO:0006633">
    <property type="term" value="P:fatty acid biosynthetic process"/>
    <property type="evidence" value="ECO:0007669"/>
    <property type="project" value="UniProtKB-KW"/>
</dbReference>
<dbReference type="CDD" id="cd00834">
    <property type="entry name" value="KAS_I_II"/>
    <property type="match status" value="1"/>
</dbReference>
<dbReference type="FunFam" id="3.40.47.10:FF:000029">
    <property type="entry name" value="3-oxoacyl-[acyl-carrier-protein] synthase 1"/>
    <property type="match status" value="1"/>
</dbReference>
<dbReference type="FunFam" id="3.40.47.10:FF:000018">
    <property type="entry name" value="3-oxoacyl-[acyl-carrier-protein] synthase 2"/>
    <property type="match status" value="1"/>
</dbReference>
<dbReference type="Gene3D" id="3.40.47.10">
    <property type="match status" value="2"/>
</dbReference>
<dbReference type="InterPro" id="IPR000794">
    <property type="entry name" value="Beta-ketoacyl_synthase"/>
</dbReference>
<dbReference type="InterPro" id="IPR014031">
    <property type="entry name" value="Ketoacyl_synth_C"/>
</dbReference>
<dbReference type="InterPro" id="IPR014030">
    <property type="entry name" value="Ketoacyl_synth_N"/>
</dbReference>
<dbReference type="InterPro" id="IPR020841">
    <property type="entry name" value="PKS_Beta-ketoAc_synthase_dom"/>
</dbReference>
<dbReference type="InterPro" id="IPR016039">
    <property type="entry name" value="Thiolase-like"/>
</dbReference>
<dbReference type="NCBIfam" id="NF005589">
    <property type="entry name" value="PRK07314.1"/>
    <property type="match status" value="1"/>
</dbReference>
<dbReference type="NCBIfam" id="NF005916">
    <property type="entry name" value="PRK07910.1"/>
    <property type="match status" value="1"/>
</dbReference>
<dbReference type="PANTHER" id="PTHR11712:SF336">
    <property type="entry name" value="3-OXOACYL-[ACYL-CARRIER-PROTEIN] SYNTHASE, MITOCHONDRIAL"/>
    <property type="match status" value="1"/>
</dbReference>
<dbReference type="PANTHER" id="PTHR11712">
    <property type="entry name" value="POLYKETIDE SYNTHASE-RELATED"/>
    <property type="match status" value="1"/>
</dbReference>
<dbReference type="Pfam" id="PF00109">
    <property type="entry name" value="ketoacyl-synt"/>
    <property type="match status" value="1"/>
</dbReference>
<dbReference type="Pfam" id="PF02801">
    <property type="entry name" value="Ketoacyl-synt_C"/>
    <property type="match status" value="1"/>
</dbReference>
<dbReference type="SMART" id="SM00825">
    <property type="entry name" value="PKS_KS"/>
    <property type="match status" value="1"/>
</dbReference>
<dbReference type="SUPFAM" id="SSF53901">
    <property type="entry name" value="Thiolase-like"/>
    <property type="match status" value="2"/>
</dbReference>
<dbReference type="PROSITE" id="PS52004">
    <property type="entry name" value="KS3_2"/>
    <property type="match status" value="1"/>
</dbReference>
<reference key="1">
    <citation type="journal article" date="2001" name="Nature">
        <title>Massive gene decay in the leprosy bacillus.</title>
        <authorList>
            <person name="Cole S.T."/>
            <person name="Eiglmeier K."/>
            <person name="Parkhill J."/>
            <person name="James K.D."/>
            <person name="Thomson N.R."/>
            <person name="Wheeler P.R."/>
            <person name="Honore N."/>
            <person name="Garnier T."/>
            <person name="Churcher C.M."/>
            <person name="Harris D.E."/>
            <person name="Mungall K.L."/>
            <person name="Basham D."/>
            <person name="Brown D."/>
            <person name="Chillingworth T."/>
            <person name="Connor R."/>
            <person name="Davies R.M."/>
            <person name="Devlin K."/>
            <person name="Duthoy S."/>
            <person name="Feltwell T."/>
            <person name="Fraser A."/>
            <person name="Hamlin N."/>
            <person name="Holroyd S."/>
            <person name="Hornsby T."/>
            <person name="Jagels K."/>
            <person name="Lacroix C."/>
            <person name="Maclean J."/>
            <person name="Moule S."/>
            <person name="Murphy L.D."/>
            <person name="Oliver K."/>
            <person name="Quail M.A."/>
            <person name="Rajandream M.A."/>
            <person name="Rutherford K.M."/>
            <person name="Rutter S."/>
            <person name="Seeger K."/>
            <person name="Simon S."/>
            <person name="Simmonds M."/>
            <person name="Skelton J."/>
            <person name="Squares R."/>
            <person name="Squares S."/>
            <person name="Stevens K."/>
            <person name="Taylor K."/>
            <person name="Whitehead S."/>
            <person name="Woodward J.R."/>
            <person name="Barrell B.G."/>
        </authorList>
    </citation>
    <scope>NUCLEOTIDE SEQUENCE [LARGE SCALE GENOMIC DNA]</scope>
    <source>
        <strain>TN</strain>
    </source>
</reference>
<comment type="function">
    <text evidence="1">Part of the mycobacterial fatty acid elongation system FAS-II, which is involved in mycolic acid biosynthesis. Catalyzes the elongation of long chain acyl-ACP substrates by the addition of two carbons from malonyl-ACP to an acyl acceptor. Involved in extension of the mycolate chains to full lengths and produces longer chain multiunsaturated hydrocarbons averaging 54 carbons in length.</text>
</comment>
<comment type="catalytic activity">
    <reaction evidence="1">
        <text>an ultra-long-chain di-unsaturated fatty acyl-[ACP] + malonyl-[ACP] + H(+) = a 3-oxo-ultra-long-chain di-unsaturated fatty acyl-[ACP] + holo-[ACP] + CO2</text>
        <dbReference type="Rhea" id="RHEA:65308"/>
        <dbReference type="Rhea" id="RHEA-COMP:9623"/>
        <dbReference type="Rhea" id="RHEA-COMP:9685"/>
        <dbReference type="Rhea" id="RHEA-COMP:16767"/>
        <dbReference type="Rhea" id="RHEA-COMP:16774"/>
        <dbReference type="ChEBI" id="CHEBI:15378"/>
        <dbReference type="ChEBI" id="CHEBI:16526"/>
        <dbReference type="ChEBI" id="CHEBI:64479"/>
        <dbReference type="ChEBI" id="CHEBI:78449"/>
        <dbReference type="ChEBI" id="CHEBI:156401"/>
        <dbReference type="ChEBI" id="CHEBI:156402"/>
        <dbReference type="EC" id="2.3.1.294"/>
    </reaction>
    <physiologicalReaction direction="left-to-right" evidence="1">
        <dbReference type="Rhea" id="RHEA:65309"/>
    </physiologicalReaction>
</comment>
<comment type="pathway">
    <text evidence="1">Lipid metabolism; mycolic acid biosynthesis.</text>
</comment>
<comment type="subcellular location">
    <subcellularLocation>
        <location evidence="1">Cytoplasm</location>
    </subcellularLocation>
</comment>
<comment type="similarity">
    <text evidence="3">Belongs to the thiolase-like superfamily. Beta-ketoacyl-ACP synthases family.</text>
</comment>
<comment type="sequence caution" evidence="3">
    <conflict type="erroneous initiation">
        <sequence resource="EMBL-CDS" id="CAA19200"/>
    </conflict>
</comment>
<comment type="sequence caution" evidence="3">
    <conflict type="erroneous initiation">
        <sequence resource="EMBL-CDS" id="CAC30607"/>
    </conflict>
</comment>
<name>KASB_MYCLE</name>